<gene>
    <name evidence="1" type="primary">deoC</name>
    <name type="ordered locus">BCQ_1887</name>
</gene>
<sequence length="223" mass="23382">MNIAKLIDHTILKANATKEDVMKVIEEAKEYKFASVCINPTWVKLAAEELAGHDVDVCTVIGFPLGASTTETKAFETKDAIAKGATEVDMVINVGALKDGDDELVEKDIYEVVQAAKGKALVKVIIETCLLTDEEKVRACELSVKAGADFVKTSTGFSTGGATAEDIALMRKTVGPNVGVKASGGVRTREDADKMVAAGASRIGASASVAIVLNDAKGATDNY</sequence>
<dbReference type="EC" id="4.1.2.4" evidence="1"/>
<dbReference type="EMBL" id="CP000227">
    <property type="protein sequence ID" value="ACM12315.1"/>
    <property type="molecule type" value="Genomic_DNA"/>
</dbReference>
<dbReference type="SMR" id="B9IXA5"/>
<dbReference type="KEGG" id="bcq:BCQ_1887"/>
<dbReference type="HOGENOM" id="CLU_053595_0_1_9"/>
<dbReference type="UniPathway" id="UPA00002">
    <property type="reaction ID" value="UER00468"/>
</dbReference>
<dbReference type="Proteomes" id="UP000000441">
    <property type="component" value="Chromosome"/>
</dbReference>
<dbReference type="GO" id="GO:0005737">
    <property type="term" value="C:cytoplasm"/>
    <property type="evidence" value="ECO:0007669"/>
    <property type="project" value="UniProtKB-SubCell"/>
</dbReference>
<dbReference type="GO" id="GO:0004139">
    <property type="term" value="F:deoxyribose-phosphate aldolase activity"/>
    <property type="evidence" value="ECO:0007669"/>
    <property type="project" value="UniProtKB-UniRule"/>
</dbReference>
<dbReference type="GO" id="GO:0006018">
    <property type="term" value="P:2-deoxyribose 1-phosphate catabolic process"/>
    <property type="evidence" value="ECO:0007669"/>
    <property type="project" value="UniProtKB-UniRule"/>
</dbReference>
<dbReference type="GO" id="GO:0016052">
    <property type="term" value="P:carbohydrate catabolic process"/>
    <property type="evidence" value="ECO:0007669"/>
    <property type="project" value="TreeGrafter"/>
</dbReference>
<dbReference type="GO" id="GO:0009264">
    <property type="term" value="P:deoxyribonucleotide catabolic process"/>
    <property type="evidence" value="ECO:0007669"/>
    <property type="project" value="InterPro"/>
</dbReference>
<dbReference type="CDD" id="cd00959">
    <property type="entry name" value="DeoC"/>
    <property type="match status" value="1"/>
</dbReference>
<dbReference type="FunFam" id="3.20.20.70:FF:000044">
    <property type="entry name" value="Deoxyribose-phosphate aldolase"/>
    <property type="match status" value="1"/>
</dbReference>
<dbReference type="Gene3D" id="3.20.20.70">
    <property type="entry name" value="Aldolase class I"/>
    <property type="match status" value="1"/>
</dbReference>
<dbReference type="HAMAP" id="MF_00114">
    <property type="entry name" value="DeoC_type1"/>
    <property type="match status" value="1"/>
</dbReference>
<dbReference type="InterPro" id="IPR013785">
    <property type="entry name" value="Aldolase_TIM"/>
</dbReference>
<dbReference type="InterPro" id="IPR011343">
    <property type="entry name" value="DeoC"/>
</dbReference>
<dbReference type="InterPro" id="IPR002915">
    <property type="entry name" value="DeoC/FbaB/LacD_aldolase"/>
</dbReference>
<dbReference type="InterPro" id="IPR028581">
    <property type="entry name" value="DeoC_typeI"/>
</dbReference>
<dbReference type="NCBIfam" id="TIGR00126">
    <property type="entry name" value="deoC"/>
    <property type="match status" value="1"/>
</dbReference>
<dbReference type="PANTHER" id="PTHR10889">
    <property type="entry name" value="DEOXYRIBOSE-PHOSPHATE ALDOLASE"/>
    <property type="match status" value="1"/>
</dbReference>
<dbReference type="PANTHER" id="PTHR10889:SF1">
    <property type="entry name" value="DEOXYRIBOSE-PHOSPHATE ALDOLASE"/>
    <property type="match status" value="1"/>
</dbReference>
<dbReference type="Pfam" id="PF01791">
    <property type="entry name" value="DeoC"/>
    <property type="match status" value="1"/>
</dbReference>
<dbReference type="PIRSF" id="PIRSF001357">
    <property type="entry name" value="DeoC"/>
    <property type="match status" value="1"/>
</dbReference>
<dbReference type="SMART" id="SM01133">
    <property type="entry name" value="DeoC"/>
    <property type="match status" value="1"/>
</dbReference>
<dbReference type="SUPFAM" id="SSF51569">
    <property type="entry name" value="Aldolase"/>
    <property type="match status" value="1"/>
</dbReference>
<feature type="chain" id="PRO_1000119170" description="Deoxyribose-phosphate aldolase">
    <location>
        <begin position="1"/>
        <end position="223"/>
    </location>
</feature>
<feature type="active site" description="Proton donor/acceptor" evidence="1">
    <location>
        <position position="89"/>
    </location>
</feature>
<feature type="active site" description="Schiff-base intermediate with acetaldehyde" evidence="1">
    <location>
        <position position="152"/>
    </location>
</feature>
<feature type="active site" description="Proton donor/acceptor" evidence="1">
    <location>
        <position position="181"/>
    </location>
</feature>
<accession>B9IXA5</accession>
<comment type="function">
    <text evidence="1">Catalyzes a reversible aldol reaction between acetaldehyde and D-glyceraldehyde 3-phosphate to generate 2-deoxy-D-ribose 5-phosphate.</text>
</comment>
<comment type="catalytic activity">
    <reaction evidence="1">
        <text>2-deoxy-D-ribose 5-phosphate = D-glyceraldehyde 3-phosphate + acetaldehyde</text>
        <dbReference type="Rhea" id="RHEA:12821"/>
        <dbReference type="ChEBI" id="CHEBI:15343"/>
        <dbReference type="ChEBI" id="CHEBI:59776"/>
        <dbReference type="ChEBI" id="CHEBI:62877"/>
        <dbReference type="EC" id="4.1.2.4"/>
    </reaction>
</comment>
<comment type="pathway">
    <text evidence="1">Carbohydrate degradation; 2-deoxy-D-ribose 1-phosphate degradation; D-glyceraldehyde 3-phosphate and acetaldehyde from 2-deoxy-alpha-D-ribose 1-phosphate: step 2/2.</text>
</comment>
<comment type="subcellular location">
    <subcellularLocation>
        <location evidence="1">Cytoplasm</location>
    </subcellularLocation>
</comment>
<comment type="similarity">
    <text evidence="1">Belongs to the DeoC/FbaB aldolase family. DeoC type 1 subfamily.</text>
</comment>
<evidence type="ECO:0000255" key="1">
    <source>
        <dbReference type="HAMAP-Rule" id="MF_00114"/>
    </source>
</evidence>
<reference key="1">
    <citation type="journal article" date="2009" name="J. Bacteriol.">
        <title>Complete genome sequence of the extremophilic Bacillus cereus strain Q1 with industrial applications.</title>
        <authorList>
            <person name="Xiong Z."/>
            <person name="Jiang Y."/>
            <person name="Qi D."/>
            <person name="Lu H."/>
            <person name="Yang F."/>
            <person name="Yang J."/>
            <person name="Chen L."/>
            <person name="Sun L."/>
            <person name="Xu X."/>
            <person name="Xue Y."/>
            <person name="Zhu Y."/>
            <person name="Jin Q."/>
        </authorList>
    </citation>
    <scope>NUCLEOTIDE SEQUENCE [LARGE SCALE GENOMIC DNA]</scope>
    <source>
        <strain>Q1</strain>
    </source>
</reference>
<name>DEOC_BACCQ</name>
<organism>
    <name type="scientific">Bacillus cereus (strain Q1)</name>
    <dbReference type="NCBI Taxonomy" id="361100"/>
    <lineage>
        <taxon>Bacteria</taxon>
        <taxon>Bacillati</taxon>
        <taxon>Bacillota</taxon>
        <taxon>Bacilli</taxon>
        <taxon>Bacillales</taxon>
        <taxon>Bacillaceae</taxon>
        <taxon>Bacillus</taxon>
        <taxon>Bacillus cereus group</taxon>
    </lineage>
</organism>
<proteinExistence type="inferred from homology"/>
<keyword id="KW-0963">Cytoplasm</keyword>
<keyword id="KW-0456">Lyase</keyword>
<keyword id="KW-0704">Schiff base</keyword>
<protein>
    <recommendedName>
        <fullName evidence="1">Deoxyribose-phosphate aldolase</fullName>
        <shortName evidence="1">DERA</shortName>
        <ecNumber evidence="1">4.1.2.4</ecNumber>
    </recommendedName>
    <alternativeName>
        <fullName evidence="1">2-deoxy-D-ribose 5-phosphate aldolase</fullName>
    </alternativeName>
    <alternativeName>
        <fullName evidence="1">Phosphodeoxyriboaldolase</fullName>
        <shortName evidence="1">Deoxyriboaldolase</shortName>
    </alternativeName>
</protein>